<accession>Q81DD2</accession>
<gene>
    <name evidence="1" type="primary">gpmA</name>
    <name type="ordered locus">BC_2435</name>
</gene>
<protein>
    <recommendedName>
        <fullName evidence="1">2,3-bisphosphoglycerate-dependent phosphoglycerate mutase</fullName>
        <shortName evidence="1">BPG-dependent PGAM</shortName>
        <shortName evidence="1">PGAM</shortName>
        <shortName evidence="1">Phosphoglyceromutase</shortName>
        <shortName evidence="1">dPGM</shortName>
        <ecNumber evidence="1">5.4.2.11</ecNumber>
    </recommendedName>
</protein>
<comment type="function">
    <text evidence="1">Catalyzes the interconversion of 2-phosphoglycerate and 3-phosphoglycerate.</text>
</comment>
<comment type="catalytic activity">
    <reaction evidence="1">
        <text>(2R)-2-phosphoglycerate = (2R)-3-phosphoglycerate</text>
        <dbReference type="Rhea" id="RHEA:15901"/>
        <dbReference type="ChEBI" id="CHEBI:58272"/>
        <dbReference type="ChEBI" id="CHEBI:58289"/>
        <dbReference type="EC" id="5.4.2.11"/>
    </reaction>
</comment>
<comment type="pathway">
    <text evidence="1">Carbohydrate degradation; glycolysis; pyruvate from D-glyceraldehyde 3-phosphate: step 3/5.</text>
</comment>
<comment type="similarity">
    <text evidence="1">Belongs to the phosphoglycerate mutase family. BPG-dependent PGAM subfamily.</text>
</comment>
<name>GPMA_BACCR</name>
<dbReference type="EC" id="5.4.2.11" evidence="1"/>
<dbReference type="EMBL" id="AE016877">
    <property type="protein sequence ID" value="AAP09398.1"/>
    <property type="molecule type" value="Genomic_DNA"/>
</dbReference>
<dbReference type="RefSeq" id="NP_832197.1">
    <property type="nucleotide sequence ID" value="NC_004722.1"/>
</dbReference>
<dbReference type="RefSeq" id="WP_000594152.1">
    <property type="nucleotide sequence ID" value="NZ_CP138336.1"/>
</dbReference>
<dbReference type="SMR" id="Q81DD2"/>
<dbReference type="STRING" id="226900.BC_2435"/>
<dbReference type="GeneID" id="67470210"/>
<dbReference type="KEGG" id="bce:BC2435"/>
<dbReference type="PATRIC" id="fig|226900.8.peg.2464"/>
<dbReference type="HOGENOM" id="CLU_033323_1_1_9"/>
<dbReference type="OrthoDB" id="9781415at2"/>
<dbReference type="UniPathway" id="UPA00109">
    <property type="reaction ID" value="UER00186"/>
</dbReference>
<dbReference type="Proteomes" id="UP000001417">
    <property type="component" value="Chromosome"/>
</dbReference>
<dbReference type="GO" id="GO:0004619">
    <property type="term" value="F:phosphoglycerate mutase activity"/>
    <property type="evidence" value="ECO:0007669"/>
    <property type="project" value="UniProtKB-EC"/>
</dbReference>
<dbReference type="GO" id="GO:0006094">
    <property type="term" value="P:gluconeogenesis"/>
    <property type="evidence" value="ECO:0007669"/>
    <property type="project" value="UniProtKB-UniRule"/>
</dbReference>
<dbReference type="GO" id="GO:0006096">
    <property type="term" value="P:glycolytic process"/>
    <property type="evidence" value="ECO:0007669"/>
    <property type="project" value="UniProtKB-UniRule"/>
</dbReference>
<dbReference type="CDD" id="cd07067">
    <property type="entry name" value="HP_PGM_like"/>
    <property type="match status" value="1"/>
</dbReference>
<dbReference type="FunFam" id="3.40.50.1240:FF:000003">
    <property type="entry name" value="2,3-bisphosphoglycerate-dependent phosphoglycerate mutase"/>
    <property type="match status" value="1"/>
</dbReference>
<dbReference type="Gene3D" id="3.40.50.1240">
    <property type="entry name" value="Phosphoglycerate mutase-like"/>
    <property type="match status" value="1"/>
</dbReference>
<dbReference type="HAMAP" id="MF_01039">
    <property type="entry name" value="PGAM_GpmA"/>
    <property type="match status" value="1"/>
</dbReference>
<dbReference type="InterPro" id="IPR013078">
    <property type="entry name" value="His_Pase_superF_clade-1"/>
</dbReference>
<dbReference type="InterPro" id="IPR029033">
    <property type="entry name" value="His_PPase_superfam"/>
</dbReference>
<dbReference type="InterPro" id="IPR001345">
    <property type="entry name" value="PG/BPGM_mutase_AS"/>
</dbReference>
<dbReference type="InterPro" id="IPR005952">
    <property type="entry name" value="Phosphogly_mut1"/>
</dbReference>
<dbReference type="NCBIfam" id="TIGR01258">
    <property type="entry name" value="pgm_1"/>
    <property type="match status" value="1"/>
</dbReference>
<dbReference type="NCBIfam" id="NF010713">
    <property type="entry name" value="PRK14115.1"/>
    <property type="match status" value="1"/>
</dbReference>
<dbReference type="PANTHER" id="PTHR11931">
    <property type="entry name" value="PHOSPHOGLYCERATE MUTASE"/>
    <property type="match status" value="1"/>
</dbReference>
<dbReference type="Pfam" id="PF00300">
    <property type="entry name" value="His_Phos_1"/>
    <property type="match status" value="1"/>
</dbReference>
<dbReference type="PIRSF" id="PIRSF000709">
    <property type="entry name" value="6PFK_2-Ptase"/>
    <property type="match status" value="1"/>
</dbReference>
<dbReference type="SMART" id="SM00855">
    <property type="entry name" value="PGAM"/>
    <property type="match status" value="1"/>
</dbReference>
<dbReference type="SUPFAM" id="SSF53254">
    <property type="entry name" value="Phosphoglycerate mutase-like"/>
    <property type="match status" value="1"/>
</dbReference>
<dbReference type="PROSITE" id="PS00175">
    <property type="entry name" value="PG_MUTASE"/>
    <property type="match status" value="1"/>
</dbReference>
<sequence>MIKLVLIRHGQSLWNLENRFTGWTDVDLSENGLSEAREAGAILKKNGYTFDVAYTSVLKRAIRTLWIVLHEMDLTWVPIHKSWKLNERHYGALQGLNKDETAQKYGEEQVHIWRRSVDVRPPALTEDDPRYEATDPRYKTLKKGEFPLTECLEDTEKRVLAYWHSEIAPTLKSGNKVIISSHGNTIRSLVKYLDNLSSDGVVSLNIPTSIPLVYELDENLRPIRHYYLSMDGEVPEGEIPKHISF</sequence>
<evidence type="ECO:0000255" key="1">
    <source>
        <dbReference type="HAMAP-Rule" id="MF_01039"/>
    </source>
</evidence>
<proteinExistence type="inferred from homology"/>
<reference key="1">
    <citation type="journal article" date="2003" name="Nature">
        <title>Genome sequence of Bacillus cereus and comparative analysis with Bacillus anthracis.</title>
        <authorList>
            <person name="Ivanova N."/>
            <person name="Sorokin A."/>
            <person name="Anderson I."/>
            <person name="Galleron N."/>
            <person name="Candelon B."/>
            <person name="Kapatral V."/>
            <person name="Bhattacharyya A."/>
            <person name="Reznik G."/>
            <person name="Mikhailova N."/>
            <person name="Lapidus A."/>
            <person name="Chu L."/>
            <person name="Mazur M."/>
            <person name="Goltsman E."/>
            <person name="Larsen N."/>
            <person name="D'Souza M."/>
            <person name="Walunas T."/>
            <person name="Grechkin Y."/>
            <person name="Pusch G."/>
            <person name="Haselkorn R."/>
            <person name="Fonstein M."/>
            <person name="Ehrlich S.D."/>
            <person name="Overbeek R."/>
            <person name="Kyrpides N.C."/>
        </authorList>
    </citation>
    <scope>NUCLEOTIDE SEQUENCE [LARGE SCALE GENOMIC DNA]</scope>
    <source>
        <strain>ATCC 14579 / DSM 31 / CCUG 7414 / JCM 2152 / NBRC 15305 / NCIMB 9373 / NCTC 2599 / NRRL B-3711</strain>
    </source>
</reference>
<organism>
    <name type="scientific">Bacillus cereus (strain ATCC 14579 / DSM 31 / CCUG 7414 / JCM 2152 / NBRC 15305 / NCIMB 9373 / NCTC 2599 / NRRL B-3711)</name>
    <dbReference type="NCBI Taxonomy" id="226900"/>
    <lineage>
        <taxon>Bacteria</taxon>
        <taxon>Bacillati</taxon>
        <taxon>Bacillota</taxon>
        <taxon>Bacilli</taxon>
        <taxon>Bacillales</taxon>
        <taxon>Bacillaceae</taxon>
        <taxon>Bacillus</taxon>
        <taxon>Bacillus cereus group</taxon>
    </lineage>
</organism>
<keyword id="KW-0312">Gluconeogenesis</keyword>
<keyword id="KW-0324">Glycolysis</keyword>
<keyword id="KW-0413">Isomerase</keyword>
<keyword id="KW-1185">Reference proteome</keyword>
<feature type="chain" id="PRO_0000179845" description="2,3-bisphosphoglycerate-dependent phosphoglycerate mutase">
    <location>
        <begin position="1"/>
        <end position="245"/>
    </location>
</feature>
<feature type="active site" description="Tele-phosphohistidine intermediate" evidence="1">
    <location>
        <position position="9"/>
    </location>
</feature>
<feature type="active site" description="Proton donor/acceptor" evidence="1">
    <location>
        <position position="87"/>
    </location>
</feature>
<feature type="binding site" evidence="1">
    <location>
        <begin position="8"/>
        <end position="15"/>
    </location>
    <ligand>
        <name>substrate</name>
    </ligand>
</feature>
<feature type="binding site" evidence="1">
    <location>
        <begin position="21"/>
        <end position="22"/>
    </location>
    <ligand>
        <name>substrate</name>
    </ligand>
</feature>
<feature type="binding site" evidence="1">
    <location>
        <position position="60"/>
    </location>
    <ligand>
        <name>substrate</name>
    </ligand>
</feature>
<feature type="binding site" evidence="1">
    <location>
        <begin position="87"/>
        <end position="90"/>
    </location>
    <ligand>
        <name>substrate</name>
    </ligand>
</feature>
<feature type="binding site" evidence="1">
    <location>
        <position position="98"/>
    </location>
    <ligand>
        <name>substrate</name>
    </ligand>
</feature>
<feature type="binding site" evidence="1">
    <location>
        <begin position="114"/>
        <end position="115"/>
    </location>
    <ligand>
        <name>substrate</name>
    </ligand>
</feature>
<feature type="binding site" evidence="1">
    <location>
        <begin position="183"/>
        <end position="184"/>
    </location>
    <ligand>
        <name>substrate</name>
    </ligand>
</feature>
<feature type="site" description="Transition state stabilizer" evidence="1">
    <location>
        <position position="182"/>
    </location>
</feature>